<feature type="chain" id="PRO_0000129828" description="Small ribosomal subunit protein uS19">
    <location>
        <begin position="1"/>
        <end position="93"/>
    </location>
</feature>
<sequence length="93" mass="10290">MARSIKKGPFVDDHVAKKVAAESAGSKKVIKTWSRRSTITPDFIGLTFAVHNGKKFIPVFVTENMVGHKLGEFAPTRTFHGHAADKKSKLKKK</sequence>
<evidence type="ECO:0000255" key="1">
    <source>
        <dbReference type="HAMAP-Rule" id="MF_00531"/>
    </source>
</evidence>
<evidence type="ECO:0000305" key="2"/>
<dbReference type="EMBL" id="AE017180">
    <property type="protein sequence ID" value="AAR36246.1"/>
    <property type="molecule type" value="Genomic_DNA"/>
</dbReference>
<dbReference type="RefSeq" id="NP_953896.1">
    <property type="nucleotide sequence ID" value="NC_002939.5"/>
</dbReference>
<dbReference type="RefSeq" id="WP_010943482.1">
    <property type="nucleotide sequence ID" value="NC_002939.5"/>
</dbReference>
<dbReference type="SMR" id="Q748Z2"/>
<dbReference type="FunCoup" id="Q748Z2">
    <property type="interactions" value="541"/>
</dbReference>
<dbReference type="STRING" id="243231.GSU2853"/>
<dbReference type="EnsemblBacteria" id="AAR36246">
    <property type="protein sequence ID" value="AAR36246"/>
    <property type="gene ID" value="GSU2853"/>
</dbReference>
<dbReference type="KEGG" id="gsu:GSU2853"/>
<dbReference type="PATRIC" id="fig|243231.5.peg.2879"/>
<dbReference type="eggNOG" id="COG0185">
    <property type="taxonomic scope" value="Bacteria"/>
</dbReference>
<dbReference type="HOGENOM" id="CLU_144911_0_1_7"/>
<dbReference type="InParanoid" id="Q748Z2"/>
<dbReference type="OrthoDB" id="9797833at2"/>
<dbReference type="Proteomes" id="UP000000577">
    <property type="component" value="Chromosome"/>
</dbReference>
<dbReference type="GO" id="GO:0005737">
    <property type="term" value="C:cytoplasm"/>
    <property type="evidence" value="ECO:0007669"/>
    <property type="project" value="UniProtKB-ARBA"/>
</dbReference>
<dbReference type="GO" id="GO:0015935">
    <property type="term" value="C:small ribosomal subunit"/>
    <property type="evidence" value="ECO:0007669"/>
    <property type="project" value="InterPro"/>
</dbReference>
<dbReference type="GO" id="GO:0019843">
    <property type="term" value="F:rRNA binding"/>
    <property type="evidence" value="ECO:0007669"/>
    <property type="project" value="UniProtKB-UniRule"/>
</dbReference>
<dbReference type="GO" id="GO:0003735">
    <property type="term" value="F:structural constituent of ribosome"/>
    <property type="evidence" value="ECO:0000318"/>
    <property type="project" value="GO_Central"/>
</dbReference>
<dbReference type="GO" id="GO:0000028">
    <property type="term" value="P:ribosomal small subunit assembly"/>
    <property type="evidence" value="ECO:0000318"/>
    <property type="project" value="GO_Central"/>
</dbReference>
<dbReference type="GO" id="GO:0006412">
    <property type="term" value="P:translation"/>
    <property type="evidence" value="ECO:0007669"/>
    <property type="project" value="UniProtKB-UniRule"/>
</dbReference>
<dbReference type="FunFam" id="3.30.860.10:FF:000001">
    <property type="entry name" value="30S ribosomal protein S19"/>
    <property type="match status" value="1"/>
</dbReference>
<dbReference type="Gene3D" id="3.30.860.10">
    <property type="entry name" value="30s Ribosomal Protein S19, Chain A"/>
    <property type="match status" value="1"/>
</dbReference>
<dbReference type="HAMAP" id="MF_00531">
    <property type="entry name" value="Ribosomal_uS19"/>
    <property type="match status" value="1"/>
</dbReference>
<dbReference type="InterPro" id="IPR002222">
    <property type="entry name" value="Ribosomal_uS19"/>
</dbReference>
<dbReference type="InterPro" id="IPR005732">
    <property type="entry name" value="Ribosomal_uS19_bac-type"/>
</dbReference>
<dbReference type="InterPro" id="IPR020934">
    <property type="entry name" value="Ribosomal_uS19_CS"/>
</dbReference>
<dbReference type="InterPro" id="IPR023575">
    <property type="entry name" value="Ribosomal_uS19_SF"/>
</dbReference>
<dbReference type="NCBIfam" id="TIGR01050">
    <property type="entry name" value="rpsS_bact"/>
    <property type="match status" value="1"/>
</dbReference>
<dbReference type="PANTHER" id="PTHR11880">
    <property type="entry name" value="RIBOSOMAL PROTEIN S19P FAMILY MEMBER"/>
    <property type="match status" value="1"/>
</dbReference>
<dbReference type="PANTHER" id="PTHR11880:SF8">
    <property type="entry name" value="SMALL RIBOSOMAL SUBUNIT PROTEIN US19M"/>
    <property type="match status" value="1"/>
</dbReference>
<dbReference type="Pfam" id="PF00203">
    <property type="entry name" value="Ribosomal_S19"/>
    <property type="match status" value="1"/>
</dbReference>
<dbReference type="PIRSF" id="PIRSF002144">
    <property type="entry name" value="Ribosomal_S19"/>
    <property type="match status" value="1"/>
</dbReference>
<dbReference type="PRINTS" id="PR00975">
    <property type="entry name" value="RIBOSOMALS19"/>
</dbReference>
<dbReference type="SUPFAM" id="SSF54570">
    <property type="entry name" value="Ribosomal protein S19"/>
    <property type="match status" value="1"/>
</dbReference>
<dbReference type="PROSITE" id="PS00323">
    <property type="entry name" value="RIBOSOMAL_S19"/>
    <property type="match status" value="1"/>
</dbReference>
<name>RS19_GEOSL</name>
<gene>
    <name evidence="1" type="primary">rpsS</name>
    <name type="ordered locus">GSU2853</name>
</gene>
<reference key="1">
    <citation type="journal article" date="2003" name="Science">
        <title>Genome of Geobacter sulfurreducens: metal reduction in subsurface environments.</title>
        <authorList>
            <person name="Methe B.A."/>
            <person name="Nelson K.E."/>
            <person name="Eisen J.A."/>
            <person name="Paulsen I.T."/>
            <person name="Nelson W.C."/>
            <person name="Heidelberg J.F."/>
            <person name="Wu D."/>
            <person name="Wu M."/>
            <person name="Ward N.L."/>
            <person name="Beanan M.J."/>
            <person name="Dodson R.J."/>
            <person name="Madupu R."/>
            <person name="Brinkac L.M."/>
            <person name="Daugherty S.C."/>
            <person name="DeBoy R.T."/>
            <person name="Durkin A.S."/>
            <person name="Gwinn M.L."/>
            <person name="Kolonay J.F."/>
            <person name="Sullivan S.A."/>
            <person name="Haft D.H."/>
            <person name="Selengut J."/>
            <person name="Davidsen T.M."/>
            <person name="Zafar N."/>
            <person name="White O."/>
            <person name="Tran B."/>
            <person name="Romero C."/>
            <person name="Forberger H.A."/>
            <person name="Weidman J.F."/>
            <person name="Khouri H.M."/>
            <person name="Feldblyum T.V."/>
            <person name="Utterback T.R."/>
            <person name="Van Aken S.E."/>
            <person name="Lovley D.R."/>
            <person name="Fraser C.M."/>
        </authorList>
    </citation>
    <scope>NUCLEOTIDE SEQUENCE [LARGE SCALE GENOMIC DNA]</scope>
    <source>
        <strain>ATCC 51573 / DSM 12127 / PCA</strain>
    </source>
</reference>
<proteinExistence type="inferred from homology"/>
<accession>Q748Z2</accession>
<organism>
    <name type="scientific">Geobacter sulfurreducens (strain ATCC 51573 / DSM 12127 / PCA)</name>
    <dbReference type="NCBI Taxonomy" id="243231"/>
    <lineage>
        <taxon>Bacteria</taxon>
        <taxon>Pseudomonadati</taxon>
        <taxon>Thermodesulfobacteriota</taxon>
        <taxon>Desulfuromonadia</taxon>
        <taxon>Geobacterales</taxon>
        <taxon>Geobacteraceae</taxon>
        <taxon>Geobacter</taxon>
    </lineage>
</organism>
<comment type="function">
    <text evidence="1">Protein S19 forms a complex with S13 that binds strongly to the 16S ribosomal RNA.</text>
</comment>
<comment type="similarity">
    <text evidence="1">Belongs to the universal ribosomal protein uS19 family.</text>
</comment>
<protein>
    <recommendedName>
        <fullName evidence="1">Small ribosomal subunit protein uS19</fullName>
    </recommendedName>
    <alternativeName>
        <fullName evidence="2">30S ribosomal protein S19</fullName>
    </alternativeName>
</protein>
<keyword id="KW-1185">Reference proteome</keyword>
<keyword id="KW-0687">Ribonucleoprotein</keyword>
<keyword id="KW-0689">Ribosomal protein</keyword>
<keyword id="KW-0694">RNA-binding</keyword>
<keyword id="KW-0699">rRNA-binding</keyword>